<accession>Q5UQS3</accession>
<reference key="1">
    <citation type="journal article" date="2004" name="Science">
        <title>The 1.2-megabase genome sequence of Mimivirus.</title>
        <authorList>
            <person name="Raoult D."/>
            <person name="Audic S."/>
            <person name="Robert C."/>
            <person name="Abergel C."/>
            <person name="Renesto P."/>
            <person name="Ogata H."/>
            <person name="La Scola B."/>
            <person name="Susan M."/>
            <person name="Claverie J.-M."/>
        </authorList>
    </citation>
    <scope>NUCLEOTIDE SEQUENCE [LARGE SCALE GENOMIC DNA]</scope>
    <source>
        <strain>Rowbotham-Bradford</strain>
    </source>
</reference>
<reference key="2">
    <citation type="journal article" date="2006" name="J. Virol.">
        <title>Mimivirus giant particles incorporate a large fraction of anonymous and unique gene products.</title>
        <authorList>
            <person name="Renesto P."/>
            <person name="Abergel C."/>
            <person name="Decloquement P."/>
            <person name="Moinier D."/>
            <person name="Azza S."/>
            <person name="Ogata H."/>
            <person name="Fourquet P."/>
            <person name="Gorvel J.-P."/>
            <person name="Claverie J.-M."/>
            <person name="Raoult D."/>
        </authorList>
    </citation>
    <scope>IDENTIFICATION BY MASS SPECTROMETRY [LARGE SCALE ANALYSIS]</scope>
    <scope>SUBCELLULAR LOCATION</scope>
</reference>
<keyword id="KW-0325">Glycoprotein</keyword>
<keyword id="KW-1043">Host membrane</keyword>
<keyword id="KW-0472">Membrane</keyword>
<keyword id="KW-1185">Reference proteome</keyword>
<keyword id="KW-0812">Transmembrane</keyword>
<keyword id="KW-1133">Transmembrane helix</keyword>
<keyword id="KW-0946">Virion</keyword>
<protein>
    <recommendedName>
        <fullName>Uncharacterized protein L330</fullName>
    </recommendedName>
</protein>
<proteinExistence type="evidence at protein level"/>
<organism>
    <name type="scientific">Acanthamoeba polyphaga mimivirus</name>
    <name type="common">APMV</name>
    <dbReference type="NCBI Taxonomy" id="212035"/>
    <lineage>
        <taxon>Viruses</taxon>
        <taxon>Varidnaviria</taxon>
        <taxon>Bamfordvirae</taxon>
        <taxon>Nucleocytoviricota</taxon>
        <taxon>Megaviricetes</taxon>
        <taxon>Imitervirales</taxon>
        <taxon>Mimiviridae</taxon>
        <taxon>Megamimivirinae</taxon>
        <taxon>Mimivirus</taxon>
        <taxon>Mimivirus bradfordmassiliense</taxon>
    </lineage>
</organism>
<name>YL330_MIMIV</name>
<organismHost>
    <name type="scientific">Acanthamoeba polyphaga</name>
    <name type="common">Amoeba</name>
    <dbReference type="NCBI Taxonomy" id="5757"/>
</organismHost>
<gene>
    <name type="ordered locus">MIMI_L330</name>
</gene>
<comment type="subcellular location">
    <subcellularLocation>
        <location evidence="3">Host membrane</location>
        <topology evidence="3">Single-pass membrane protein</topology>
    </subcellularLocation>
    <subcellularLocation>
        <location evidence="2">Virion</location>
    </subcellularLocation>
</comment>
<sequence>MAFNNSTIIIIIVIAFAFFLIYSQNNQPKIIQQPVPQISQFKSQLNQPQNSQHNGHLNPSIISPQLCPKCDKENCSLEQISPSRSKSPTPQITNVHIEHESDPYSDPIKKQDIYGMMDPLTFPQQRLPREVLQKYQEYYDKNGSYPPFGQNTQPLFDNPVLAGILIKQVDENEPFTDNVPSSIPLFKVKSNKNSNRFFYYIIDQRYFSKLELKIPLDSIRVNGVRYNNAEFYGIPELFDGDVIDNIALYPSNRFSVKLYKIYSFP</sequence>
<evidence type="ECO:0000255" key="1"/>
<evidence type="ECO:0000269" key="2">
    <source>
    </source>
</evidence>
<evidence type="ECO:0000305" key="3"/>
<dbReference type="EMBL" id="AY653733">
    <property type="protein sequence ID" value="AAV50599.1"/>
    <property type="molecule type" value="Genomic_DNA"/>
</dbReference>
<dbReference type="KEGG" id="vg:9924948"/>
<dbReference type="OrthoDB" id="13252at10239"/>
<dbReference type="Proteomes" id="UP000001134">
    <property type="component" value="Genome"/>
</dbReference>
<dbReference type="GO" id="GO:0033644">
    <property type="term" value="C:host cell membrane"/>
    <property type="evidence" value="ECO:0007669"/>
    <property type="project" value="UniProtKB-SubCell"/>
</dbReference>
<dbReference type="GO" id="GO:0016020">
    <property type="term" value="C:membrane"/>
    <property type="evidence" value="ECO:0007669"/>
    <property type="project" value="UniProtKB-KW"/>
</dbReference>
<dbReference type="GO" id="GO:0044423">
    <property type="term" value="C:virion component"/>
    <property type="evidence" value="ECO:0007669"/>
    <property type="project" value="UniProtKB-KW"/>
</dbReference>
<feature type="chain" id="PRO_0000253244" description="Uncharacterized protein L330">
    <location>
        <begin position="1"/>
        <end position="265"/>
    </location>
</feature>
<feature type="transmembrane region" description="Helical" evidence="1">
    <location>
        <begin position="1"/>
        <end position="21"/>
    </location>
</feature>
<feature type="glycosylation site" description="N-linked (GlcNAc...) asparagine; by host" evidence="1">
    <location>
        <position position="74"/>
    </location>
</feature>
<feature type="glycosylation site" description="N-linked (GlcNAc...) asparagine; by host" evidence="1">
    <location>
        <position position="142"/>
    </location>
</feature>